<feature type="chain" id="PRO_0000379809" description="Putative hydro-lyase ACICU_01268">
    <location>
        <begin position="1"/>
        <end position="268"/>
    </location>
</feature>
<keyword id="KW-0456">Lyase</keyword>
<dbReference type="EC" id="4.2.1.-" evidence="1"/>
<dbReference type="EMBL" id="CP000863">
    <property type="protein sequence ID" value="ACC56580.1"/>
    <property type="molecule type" value="Genomic_DNA"/>
</dbReference>
<dbReference type="RefSeq" id="WP_000276191.1">
    <property type="nucleotide sequence ID" value="NZ_CP031380.1"/>
</dbReference>
<dbReference type="SMR" id="B2HXI1"/>
<dbReference type="KEGG" id="abc:ACICU_01268"/>
<dbReference type="HOGENOM" id="CLU_059759_0_0_6"/>
<dbReference type="Proteomes" id="UP000008839">
    <property type="component" value="Chromosome"/>
</dbReference>
<dbReference type="GO" id="GO:0016829">
    <property type="term" value="F:lyase activity"/>
    <property type="evidence" value="ECO:0007669"/>
    <property type="project" value="UniProtKB-KW"/>
</dbReference>
<dbReference type="FunFam" id="3.30.2040.10:FF:000001">
    <property type="entry name" value="D-glutamate cyclase, mitochondrial"/>
    <property type="match status" value="1"/>
</dbReference>
<dbReference type="Gene3D" id="3.40.1640.10">
    <property type="entry name" value="PSTPO5379-like"/>
    <property type="match status" value="1"/>
</dbReference>
<dbReference type="Gene3D" id="3.30.2040.10">
    <property type="entry name" value="PSTPO5379-like domain"/>
    <property type="match status" value="1"/>
</dbReference>
<dbReference type="HAMAP" id="MF_01830">
    <property type="entry name" value="Hydro_lyase"/>
    <property type="match status" value="1"/>
</dbReference>
<dbReference type="InterPro" id="IPR009906">
    <property type="entry name" value="D-Glu_cyclase"/>
</dbReference>
<dbReference type="InterPro" id="IPR038021">
    <property type="entry name" value="Putative_hydro-lyase"/>
</dbReference>
<dbReference type="InterPro" id="IPR016938">
    <property type="entry name" value="UPF0317"/>
</dbReference>
<dbReference type="NCBIfam" id="NF003969">
    <property type="entry name" value="PRK05463.1"/>
    <property type="match status" value="1"/>
</dbReference>
<dbReference type="PANTHER" id="PTHR32022">
    <property type="entry name" value="D-GLUTAMATE CYCLASE, MITOCHONDRIAL"/>
    <property type="match status" value="1"/>
</dbReference>
<dbReference type="PANTHER" id="PTHR32022:SF10">
    <property type="entry name" value="D-GLUTAMATE CYCLASE, MITOCHONDRIAL"/>
    <property type="match status" value="1"/>
</dbReference>
<dbReference type="Pfam" id="PF07286">
    <property type="entry name" value="D-Glu_cyclase"/>
    <property type="match status" value="1"/>
</dbReference>
<dbReference type="PIRSF" id="PIRSF029755">
    <property type="entry name" value="UCP029755"/>
    <property type="match status" value="1"/>
</dbReference>
<dbReference type="SUPFAM" id="SSF160920">
    <property type="entry name" value="PSTPO5379-like"/>
    <property type="match status" value="1"/>
</dbReference>
<accession>B2HXI1</accession>
<comment type="similarity">
    <text evidence="1">Belongs to the D-glutamate cyclase family.</text>
</comment>
<organism>
    <name type="scientific">Acinetobacter baumannii (strain ACICU)</name>
    <dbReference type="NCBI Taxonomy" id="405416"/>
    <lineage>
        <taxon>Bacteria</taxon>
        <taxon>Pseudomonadati</taxon>
        <taxon>Pseudomonadota</taxon>
        <taxon>Gammaproteobacteria</taxon>
        <taxon>Moraxellales</taxon>
        <taxon>Moraxellaceae</taxon>
        <taxon>Acinetobacter</taxon>
        <taxon>Acinetobacter calcoaceticus/baumannii complex</taxon>
    </lineage>
</organism>
<reference key="1">
    <citation type="journal article" date="2008" name="Antimicrob. Agents Chemother.">
        <title>Whole-genome pyrosequencing of an epidemic multidrug-resistant Acinetobacter baumannii strain belonging to the European clone II group.</title>
        <authorList>
            <person name="Iacono M."/>
            <person name="Villa L."/>
            <person name="Fortini D."/>
            <person name="Bordoni R."/>
            <person name="Imperi F."/>
            <person name="Bonnal R.J."/>
            <person name="Sicheritz-Ponten T."/>
            <person name="De Bellis G."/>
            <person name="Visca P."/>
            <person name="Cassone A."/>
            <person name="Carattoli A."/>
        </authorList>
    </citation>
    <scope>NUCLEOTIDE SEQUENCE [LARGE SCALE GENOMIC DNA]</scope>
    <source>
        <strain>ACICU</strain>
    </source>
</reference>
<evidence type="ECO:0000255" key="1">
    <source>
        <dbReference type="HAMAP-Rule" id="MF_01830"/>
    </source>
</evidence>
<name>Y1268_ACIBC</name>
<sequence length="268" mass="29559">MYKDIKVDPAQLEAALDARLKIRAGFDKPTAGMAAGMTQVNMISVPKEWAYDFLLYAHRNPQSCPVLDVLEEGIYATKLAADSDIRTDFPRYRIWKDGEMVDEVTDAREIYNAHPDLVTFLIGCSFSFETALQEAGIEVRHIHDDTNVPMYLSNIECEPAGRISGNMVVSMRPIPSHQISEAVKITARMPSVHGAPVHIGHPESLGISDVNKPDFGDASRIEAGEIPVFWACGVTPQAAVMNSKIPFAISHAPGYMFITDIPDRAWMG</sequence>
<proteinExistence type="inferred from homology"/>
<gene>
    <name type="ordered locus">ACICU_01268</name>
</gene>
<protein>
    <recommendedName>
        <fullName evidence="1">Putative hydro-lyase ACICU_01268</fullName>
        <ecNumber evidence="1">4.2.1.-</ecNumber>
    </recommendedName>
</protein>